<gene>
    <name evidence="1" type="primary">purT</name>
    <name type="ordered locus">BDI_3578</name>
</gene>
<accession>A6LHW2</accession>
<organism>
    <name type="scientific">Parabacteroides distasonis (strain ATCC 8503 / DSM 20701 / CIP 104284 / JCM 5825 / NCTC 11152)</name>
    <dbReference type="NCBI Taxonomy" id="435591"/>
    <lineage>
        <taxon>Bacteria</taxon>
        <taxon>Pseudomonadati</taxon>
        <taxon>Bacteroidota</taxon>
        <taxon>Bacteroidia</taxon>
        <taxon>Bacteroidales</taxon>
        <taxon>Tannerellaceae</taxon>
        <taxon>Parabacteroides</taxon>
    </lineage>
</organism>
<name>PURT_PARD8</name>
<dbReference type="EC" id="6.3.1.21" evidence="1"/>
<dbReference type="EMBL" id="CP000140">
    <property type="protein sequence ID" value="ABR45276.1"/>
    <property type="molecule type" value="Genomic_DNA"/>
</dbReference>
<dbReference type="RefSeq" id="WP_005859304.1">
    <property type="nucleotide sequence ID" value="NC_009615.1"/>
</dbReference>
<dbReference type="SMR" id="A6LHW2"/>
<dbReference type="STRING" id="435591.BDI_3578"/>
<dbReference type="PaxDb" id="435591-BDI_3578"/>
<dbReference type="KEGG" id="pdi:BDI_3578"/>
<dbReference type="eggNOG" id="COG0027">
    <property type="taxonomic scope" value="Bacteria"/>
</dbReference>
<dbReference type="HOGENOM" id="CLU_011534_1_3_10"/>
<dbReference type="BioCyc" id="PDIS435591:G1G5A-3670-MONOMER"/>
<dbReference type="UniPathway" id="UPA00074">
    <property type="reaction ID" value="UER00127"/>
</dbReference>
<dbReference type="Proteomes" id="UP000000566">
    <property type="component" value="Chromosome"/>
</dbReference>
<dbReference type="GO" id="GO:0005829">
    <property type="term" value="C:cytosol"/>
    <property type="evidence" value="ECO:0007669"/>
    <property type="project" value="TreeGrafter"/>
</dbReference>
<dbReference type="GO" id="GO:0005524">
    <property type="term" value="F:ATP binding"/>
    <property type="evidence" value="ECO:0007669"/>
    <property type="project" value="UniProtKB-UniRule"/>
</dbReference>
<dbReference type="GO" id="GO:0000287">
    <property type="term" value="F:magnesium ion binding"/>
    <property type="evidence" value="ECO:0007669"/>
    <property type="project" value="InterPro"/>
</dbReference>
<dbReference type="GO" id="GO:0043815">
    <property type="term" value="F:phosphoribosylglycinamide formyltransferase 2 activity"/>
    <property type="evidence" value="ECO:0007669"/>
    <property type="project" value="UniProtKB-UniRule"/>
</dbReference>
<dbReference type="GO" id="GO:0004644">
    <property type="term" value="F:phosphoribosylglycinamide formyltransferase activity"/>
    <property type="evidence" value="ECO:0007669"/>
    <property type="project" value="InterPro"/>
</dbReference>
<dbReference type="GO" id="GO:0006189">
    <property type="term" value="P:'de novo' IMP biosynthetic process"/>
    <property type="evidence" value="ECO:0007669"/>
    <property type="project" value="UniProtKB-UniRule"/>
</dbReference>
<dbReference type="FunFam" id="3.30.1490.20:FF:000013">
    <property type="entry name" value="Formate-dependent phosphoribosylglycinamide formyltransferase"/>
    <property type="match status" value="1"/>
</dbReference>
<dbReference type="FunFam" id="3.40.50.20:FF:000007">
    <property type="entry name" value="Formate-dependent phosphoribosylglycinamide formyltransferase"/>
    <property type="match status" value="1"/>
</dbReference>
<dbReference type="Gene3D" id="3.40.50.20">
    <property type="match status" value="1"/>
</dbReference>
<dbReference type="Gene3D" id="3.30.1490.20">
    <property type="entry name" value="ATP-grasp fold, A domain"/>
    <property type="match status" value="1"/>
</dbReference>
<dbReference type="Gene3D" id="3.30.470.20">
    <property type="entry name" value="ATP-grasp fold, B domain"/>
    <property type="match status" value="1"/>
</dbReference>
<dbReference type="HAMAP" id="MF_01643">
    <property type="entry name" value="PurT"/>
    <property type="match status" value="1"/>
</dbReference>
<dbReference type="InterPro" id="IPR011761">
    <property type="entry name" value="ATP-grasp"/>
</dbReference>
<dbReference type="InterPro" id="IPR003135">
    <property type="entry name" value="ATP-grasp_carboxylate-amine"/>
</dbReference>
<dbReference type="InterPro" id="IPR013815">
    <property type="entry name" value="ATP_grasp_subdomain_1"/>
</dbReference>
<dbReference type="InterPro" id="IPR016185">
    <property type="entry name" value="PreATP-grasp_dom_sf"/>
</dbReference>
<dbReference type="InterPro" id="IPR005862">
    <property type="entry name" value="PurT"/>
</dbReference>
<dbReference type="InterPro" id="IPR054350">
    <property type="entry name" value="PurT/PurK_preATP-grasp"/>
</dbReference>
<dbReference type="InterPro" id="IPR048740">
    <property type="entry name" value="PurT_C"/>
</dbReference>
<dbReference type="InterPro" id="IPR011054">
    <property type="entry name" value="Rudment_hybrid_motif"/>
</dbReference>
<dbReference type="NCBIfam" id="NF006766">
    <property type="entry name" value="PRK09288.1"/>
    <property type="match status" value="1"/>
</dbReference>
<dbReference type="NCBIfam" id="TIGR01142">
    <property type="entry name" value="purT"/>
    <property type="match status" value="1"/>
</dbReference>
<dbReference type="PANTHER" id="PTHR43055">
    <property type="entry name" value="FORMATE-DEPENDENT PHOSPHORIBOSYLGLYCINAMIDE FORMYLTRANSFERASE"/>
    <property type="match status" value="1"/>
</dbReference>
<dbReference type="PANTHER" id="PTHR43055:SF1">
    <property type="entry name" value="FORMATE-DEPENDENT PHOSPHORIBOSYLGLYCINAMIDE FORMYLTRANSFERASE"/>
    <property type="match status" value="1"/>
</dbReference>
<dbReference type="Pfam" id="PF02222">
    <property type="entry name" value="ATP-grasp"/>
    <property type="match status" value="1"/>
</dbReference>
<dbReference type="Pfam" id="PF21244">
    <property type="entry name" value="PurT_C"/>
    <property type="match status" value="1"/>
</dbReference>
<dbReference type="Pfam" id="PF22660">
    <property type="entry name" value="RS_preATP-grasp-like"/>
    <property type="match status" value="1"/>
</dbReference>
<dbReference type="SUPFAM" id="SSF56059">
    <property type="entry name" value="Glutathione synthetase ATP-binding domain-like"/>
    <property type="match status" value="1"/>
</dbReference>
<dbReference type="SUPFAM" id="SSF52440">
    <property type="entry name" value="PreATP-grasp domain"/>
    <property type="match status" value="1"/>
</dbReference>
<dbReference type="SUPFAM" id="SSF51246">
    <property type="entry name" value="Rudiment single hybrid motif"/>
    <property type="match status" value="1"/>
</dbReference>
<dbReference type="PROSITE" id="PS50975">
    <property type="entry name" value="ATP_GRASP"/>
    <property type="match status" value="1"/>
</dbReference>
<feature type="chain" id="PRO_0000319191" description="Formate-dependent phosphoribosylglycinamide formyltransferase">
    <location>
        <begin position="1"/>
        <end position="393"/>
    </location>
</feature>
<feature type="domain" description="ATP-grasp" evidence="1">
    <location>
        <begin position="119"/>
        <end position="308"/>
    </location>
</feature>
<feature type="binding site" evidence="1">
    <location>
        <begin position="22"/>
        <end position="23"/>
    </location>
    <ligand>
        <name>N(1)-(5-phospho-beta-D-ribosyl)glycinamide</name>
        <dbReference type="ChEBI" id="CHEBI:143788"/>
    </ligand>
</feature>
<feature type="binding site" evidence="1">
    <location>
        <position position="82"/>
    </location>
    <ligand>
        <name>N(1)-(5-phospho-beta-D-ribosyl)glycinamide</name>
        <dbReference type="ChEBI" id="CHEBI:143788"/>
    </ligand>
</feature>
<feature type="binding site" evidence="1">
    <location>
        <position position="114"/>
    </location>
    <ligand>
        <name>ATP</name>
        <dbReference type="ChEBI" id="CHEBI:30616"/>
    </ligand>
</feature>
<feature type="binding site" evidence="1">
    <location>
        <position position="155"/>
    </location>
    <ligand>
        <name>ATP</name>
        <dbReference type="ChEBI" id="CHEBI:30616"/>
    </ligand>
</feature>
<feature type="binding site" evidence="1">
    <location>
        <begin position="160"/>
        <end position="165"/>
    </location>
    <ligand>
        <name>ATP</name>
        <dbReference type="ChEBI" id="CHEBI:30616"/>
    </ligand>
</feature>
<feature type="binding site" evidence="1">
    <location>
        <begin position="195"/>
        <end position="198"/>
    </location>
    <ligand>
        <name>ATP</name>
        <dbReference type="ChEBI" id="CHEBI:30616"/>
    </ligand>
</feature>
<feature type="binding site" evidence="1">
    <location>
        <position position="203"/>
    </location>
    <ligand>
        <name>ATP</name>
        <dbReference type="ChEBI" id="CHEBI:30616"/>
    </ligand>
</feature>
<feature type="binding site" evidence="1">
    <location>
        <position position="267"/>
    </location>
    <ligand>
        <name>Mg(2+)</name>
        <dbReference type="ChEBI" id="CHEBI:18420"/>
    </ligand>
</feature>
<feature type="binding site" evidence="1">
    <location>
        <position position="279"/>
    </location>
    <ligand>
        <name>Mg(2+)</name>
        <dbReference type="ChEBI" id="CHEBI:18420"/>
    </ligand>
</feature>
<feature type="binding site" evidence="1">
    <location>
        <position position="286"/>
    </location>
    <ligand>
        <name>N(1)-(5-phospho-beta-D-ribosyl)glycinamide</name>
        <dbReference type="ChEBI" id="CHEBI:143788"/>
    </ligand>
</feature>
<feature type="binding site" evidence="1">
    <location>
        <position position="356"/>
    </location>
    <ligand>
        <name>N(1)-(5-phospho-beta-D-ribosyl)glycinamide</name>
        <dbReference type="ChEBI" id="CHEBI:143788"/>
    </ligand>
</feature>
<feature type="binding site" evidence="1">
    <location>
        <begin position="363"/>
        <end position="364"/>
    </location>
    <ligand>
        <name>N(1)-(5-phospho-beta-D-ribosyl)glycinamide</name>
        <dbReference type="ChEBI" id="CHEBI:143788"/>
    </ligand>
</feature>
<evidence type="ECO:0000255" key="1">
    <source>
        <dbReference type="HAMAP-Rule" id="MF_01643"/>
    </source>
</evidence>
<comment type="function">
    <text evidence="1">Involved in the de novo purine biosynthesis. Catalyzes the transfer of formate to 5-phospho-ribosyl-glycinamide (GAR), producing 5-phospho-ribosyl-N-formylglycinamide (FGAR). Formate is provided by PurU via hydrolysis of 10-formyl-tetrahydrofolate.</text>
</comment>
<comment type="catalytic activity">
    <reaction evidence="1">
        <text>N(1)-(5-phospho-beta-D-ribosyl)glycinamide + formate + ATP = N(2)-formyl-N(1)-(5-phospho-beta-D-ribosyl)glycinamide + ADP + phosphate + H(+)</text>
        <dbReference type="Rhea" id="RHEA:24829"/>
        <dbReference type="ChEBI" id="CHEBI:15378"/>
        <dbReference type="ChEBI" id="CHEBI:15740"/>
        <dbReference type="ChEBI" id="CHEBI:30616"/>
        <dbReference type="ChEBI" id="CHEBI:43474"/>
        <dbReference type="ChEBI" id="CHEBI:143788"/>
        <dbReference type="ChEBI" id="CHEBI:147286"/>
        <dbReference type="ChEBI" id="CHEBI:456216"/>
        <dbReference type="EC" id="6.3.1.21"/>
    </reaction>
    <physiologicalReaction direction="left-to-right" evidence="1">
        <dbReference type="Rhea" id="RHEA:24830"/>
    </physiologicalReaction>
</comment>
<comment type="pathway">
    <text evidence="1">Purine metabolism; IMP biosynthesis via de novo pathway; N(2)-formyl-N(1)-(5-phospho-D-ribosyl)glycinamide from N(1)-(5-phospho-D-ribosyl)glycinamide (formate route): step 1/1.</text>
</comment>
<comment type="subunit">
    <text evidence="1">Homodimer.</text>
</comment>
<comment type="similarity">
    <text evidence="1">Belongs to the PurK/PurT family.</text>
</comment>
<reference key="1">
    <citation type="journal article" date="2007" name="PLoS Biol.">
        <title>Evolution of symbiotic bacteria in the distal human intestine.</title>
        <authorList>
            <person name="Xu J."/>
            <person name="Mahowald M.A."/>
            <person name="Ley R.E."/>
            <person name="Lozupone C.A."/>
            <person name="Hamady M."/>
            <person name="Martens E.C."/>
            <person name="Henrissat B."/>
            <person name="Coutinho P.M."/>
            <person name="Minx P."/>
            <person name="Latreille P."/>
            <person name="Cordum H."/>
            <person name="Van Brunt A."/>
            <person name="Kim K."/>
            <person name="Fulton R.S."/>
            <person name="Fulton L.A."/>
            <person name="Clifton S.W."/>
            <person name="Wilson R.K."/>
            <person name="Knight R.D."/>
            <person name="Gordon J.I."/>
        </authorList>
    </citation>
    <scope>NUCLEOTIDE SEQUENCE [LARGE SCALE GENOMIC DNA]</scope>
    <source>
        <strain>ATCC 8503 / DSM 20701 / CIP 104284 / JCM 5825 / NCTC 11152</strain>
    </source>
</reference>
<proteinExistence type="inferred from homology"/>
<sequence length="393" mass="43171">MVTIGTPKSATATKVVLCGSGELGKEFVIELQRYGVEVIALDKYPDAPAMQVAHRSYVVSMLDGDALREIIEKEKPDYIVPEVEAIATRTLMELEEEGYHVIPTARATWLTMNREGIRRLAAEELGLPTSPYRFAETEEEFKEAVKVIGMPCVVKPIMSSSGHGQSVVREEKDIDRAWQYAQEGGRAGAGKVIVEGFVDFDYEITQLTVRHIGGTSFLEPVGHVQVDGDYRESWQPQAMSLAAKAKAREIAGKITEALGGRGIFGVELFIKGDDVIFSEVSPRPHDTGMVTMITQDLSQFALHARAVLGLPIPNIVFHGAGASRAVVVEGDSDRLSLGNLDKVLEQPDTQMRFFGKPEVHGHRRMAVLLARGLDVTEAREKTGVMMEQLNVKL</sequence>
<keyword id="KW-0067">ATP-binding</keyword>
<keyword id="KW-0436">Ligase</keyword>
<keyword id="KW-0460">Magnesium</keyword>
<keyword id="KW-0479">Metal-binding</keyword>
<keyword id="KW-0547">Nucleotide-binding</keyword>
<keyword id="KW-0658">Purine biosynthesis</keyword>
<keyword id="KW-1185">Reference proteome</keyword>
<protein>
    <recommendedName>
        <fullName evidence="1">Formate-dependent phosphoribosylglycinamide formyltransferase</fullName>
        <ecNumber evidence="1">6.3.1.21</ecNumber>
    </recommendedName>
    <alternativeName>
        <fullName evidence="1">5'-phosphoribosylglycinamide transformylase 2</fullName>
    </alternativeName>
    <alternativeName>
        <fullName evidence="1">Formate-dependent GAR transformylase</fullName>
    </alternativeName>
    <alternativeName>
        <fullName evidence="1">GAR transformylase 2</fullName>
        <shortName evidence="1">GART 2</shortName>
    </alternativeName>
    <alternativeName>
        <fullName evidence="1">Non-folate glycinamide ribonucleotide transformylase</fullName>
    </alternativeName>
    <alternativeName>
        <fullName evidence="1">Phosphoribosylglycinamide formyltransferase 2</fullName>
    </alternativeName>
</protein>